<accession>A8Y236</accession>
<keyword id="KW-1015">Disulfide bond</keyword>
<keyword id="KW-0325">Glycoprotein</keyword>
<keyword id="KW-0328">Glycosyltransferase</keyword>
<keyword id="KW-0333">Golgi apparatus</keyword>
<keyword id="KW-0430">Lectin</keyword>
<keyword id="KW-0464">Manganese</keyword>
<keyword id="KW-0472">Membrane</keyword>
<keyword id="KW-0479">Metal-binding</keyword>
<keyword id="KW-1185">Reference proteome</keyword>
<keyword id="KW-0735">Signal-anchor</keyword>
<keyword id="KW-0808">Transferase</keyword>
<keyword id="KW-0812">Transmembrane</keyword>
<keyword id="KW-1133">Transmembrane helix</keyword>
<name>GLT10_CAEBR</name>
<protein>
    <recommendedName>
        <fullName>Putative polypeptide N-acetylgalactosaminyltransferase 10</fullName>
        <shortName>pp-GaNTase 10</shortName>
        <ecNumber>2.4.1.41</ecNumber>
    </recommendedName>
    <alternativeName>
        <fullName>Protein-UDP acetylgalactosaminyltransferase 10</fullName>
    </alternativeName>
    <alternativeName>
        <fullName>UDP-GalNAc:polypeptide N-acetylgalactosaminyltransferase 10</fullName>
    </alternativeName>
</protein>
<sequence length="629" mass="73008">MGLSRYLSRRHHWVIQYCALLLFLYFIYSYVAVSNDAPRLNEEIPVFREFSEDLPQGSRKFPEQKPAAALGDEALDPFEKYRGHEKIKWEDEVAYEKDKAREGPGEWGKPVKLPDDKETEKEALSLYKANGYNAYISDMISLNRSIKDIRHKECKKMTYSAKLPTVSVIFPFHEEHNSTLLRSVYSVINRSPPELLKEIILVDDFSEKPALRQPLEDFLKKNKIDHIVKILRTKKREGLIRGRQLGAQEATGEILIFLDAHSECNYNWLPPLLDPIADDYRTVVCPFVDVIDCETYEIRPQDEGARGSFDWAFNYKRLPLTKKDRENPTKPFDSPVMAGGYFAISAKWFWELGGYDEGLDIWGGEQYELSFKVWQCHGKMVDAPCSRVAHIYRCKYAPFKNAGMGDFVSRNYKRVAEVWMDEYKETLYKHRPGIGNADAGDLKLMKGIREKLQCKSFDWFMKEIAFDQDKYYPAIEPKASAEGEIRHVASNLCIDTQFKEQNQRFGLRKCASEDKDGGGEQDLRLTRWHDIRPKGRKICFDVSTSVDKAPIILFDCHSMKGNQLFKYRMPQKQIYHPVSGQCLTADENGKGFLHMKKCDSSSKLQQWAWQTIDQELLDQRQANEHKELE</sequence>
<feature type="chain" id="PRO_0000328999" description="Putative polypeptide N-acetylgalactosaminyltransferase 10">
    <location>
        <begin position="1"/>
        <end position="629"/>
    </location>
</feature>
<feature type="topological domain" description="Cytoplasmic" evidence="7">
    <location>
        <begin position="1"/>
        <end position="12"/>
    </location>
</feature>
<feature type="transmembrane region" description="Helical; Signal-anchor for type II membrane protein">
    <location>
        <begin position="13"/>
        <end position="33"/>
    </location>
</feature>
<feature type="topological domain" description="Lumenal" evidence="7">
    <location>
        <begin position="34"/>
        <end position="629"/>
    </location>
</feature>
<feature type="domain" description="Ricin B-type lectin" evidence="8">
    <location>
        <begin position="526"/>
        <end position="629"/>
    </location>
</feature>
<feature type="region of interest" description="Catalytic subdomain A">
    <location>
        <begin position="163"/>
        <end position="275"/>
    </location>
</feature>
<feature type="region of interest" description="Catalytic subdomain B">
    <location>
        <begin position="331"/>
        <end position="393"/>
    </location>
</feature>
<feature type="region of interest" description="Flexible loop" evidence="1">
    <location>
        <begin position="393"/>
        <end position="406"/>
    </location>
</feature>
<feature type="binding site" evidence="1">
    <location>
        <position position="204"/>
    </location>
    <ligand>
        <name>substrate</name>
    </ligand>
</feature>
<feature type="binding site" evidence="1">
    <location>
        <position position="236"/>
    </location>
    <ligand>
        <name>substrate</name>
    </ligand>
</feature>
<feature type="binding site" evidence="1">
    <location>
        <position position="259"/>
    </location>
    <ligand>
        <name>Mn(2+)</name>
        <dbReference type="ChEBI" id="CHEBI:29035"/>
    </ligand>
</feature>
<feature type="binding site" evidence="1">
    <location>
        <position position="261"/>
    </location>
    <ligand>
        <name>Mn(2+)</name>
        <dbReference type="ChEBI" id="CHEBI:29035"/>
    </ligand>
</feature>
<feature type="binding site" evidence="1">
    <location>
        <position position="362"/>
    </location>
    <ligand>
        <name>substrate</name>
    </ligand>
</feature>
<feature type="binding site" evidence="1">
    <location>
        <position position="390"/>
    </location>
    <ligand>
        <name>Mn(2+)</name>
        <dbReference type="ChEBI" id="CHEBI:29035"/>
    </ligand>
</feature>
<feature type="binding site" evidence="1">
    <location>
        <position position="393"/>
    </location>
    <ligand>
        <name>substrate</name>
    </ligand>
</feature>
<feature type="glycosylation site" description="N-linked (GlcNAc...) asparagine" evidence="7">
    <location>
        <position position="143"/>
    </location>
</feature>
<feature type="glycosylation site" description="N-linked (GlcNAc...) asparagine" evidence="7">
    <location>
        <position position="177"/>
    </location>
</feature>
<feature type="disulfide bond" evidence="8">
    <location>
        <begin position="154"/>
        <end position="385"/>
    </location>
</feature>
<feature type="disulfide bond" evidence="8">
    <location>
        <begin position="376"/>
        <end position="454"/>
    </location>
</feature>
<feature type="disulfide bond" evidence="8">
    <location>
        <begin position="493"/>
        <end position="510"/>
    </location>
</feature>
<feature type="disulfide bond" evidence="8">
    <location>
        <begin position="539"/>
        <end position="556"/>
    </location>
</feature>
<feature type="disulfide bond" evidence="8">
    <location>
        <begin position="582"/>
        <end position="598"/>
    </location>
</feature>
<comment type="function">
    <text evidence="6">May catalyze the initial reaction in O-linked oligosaccharide biosynthesis, the transfer of an N-acetyl-D-galactosamine residue to a serine or threonine residue on the protein receptor.</text>
</comment>
<comment type="catalytic activity">
    <reaction>
        <text>L-seryl-[protein] + UDP-N-acetyl-alpha-D-galactosamine = a 3-O-[N-acetyl-alpha-D-galactosaminyl]-L-seryl-[protein] + UDP + H(+)</text>
        <dbReference type="Rhea" id="RHEA:23956"/>
        <dbReference type="Rhea" id="RHEA-COMP:9863"/>
        <dbReference type="Rhea" id="RHEA-COMP:12788"/>
        <dbReference type="ChEBI" id="CHEBI:15378"/>
        <dbReference type="ChEBI" id="CHEBI:29999"/>
        <dbReference type="ChEBI" id="CHEBI:53604"/>
        <dbReference type="ChEBI" id="CHEBI:58223"/>
        <dbReference type="ChEBI" id="CHEBI:67138"/>
        <dbReference type="EC" id="2.4.1.41"/>
    </reaction>
</comment>
<comment type="catalytic activity">
    <reaction>
        <text>L-threonyl-[protein] + UDP-N-acetyl-alpha-D-galactosamine = a 3-O-[N-acetyl-alpha-D-galactosaminyl]-L-threonyl-[protein] + UDP + H(+)</text>
        <dbReference type="Rhea" id="RHEA:52424"/>
        <dbReference type="Rhea" id="RHEA-COMP:11060"/>
        <dbReference type="Rhea" id="RHEA-COMP:11689"/>
        <dbReference type="ChEBI" id="CHEBI:15378"/>
        <dbReference type="ChEBI" id="CHEBI:30013"/>
        <dbReference type="ChEBI" id="CHEBI:58223"/>
        <dbReference type="ChEBI" id="CHEBI:67138"/>
        <dbReference type="ChEBI" id="CHEBI:87075"/>
        <dbReference type="EC" id="2.4.1.41"/>
    </reaction>
</comment>
<comment type="cofactor">
    <cofactor evidence="4">
        <name>Mn(2+)</name>
        <dbReference type="ChEBI" id="CHEBI:29035"/>
    </cofactor>
</comment>
<comment type="pathway">
    <text evidence="6">Protein modification; protein glycosylation.</text>
</comment>
<comment type="subcellular location">
    <subcellularLocation>
        <location evidence="4">Golgi apparatus membrane</location>
        <topology evidence="4">Single-pass type II membrane protein</topology>
    </subcellularLocation>
</comment>
<comment type="domain">
    <text evidence="2">There are two conserved domains in the glycosyltransferase region: the N-terminal domain (domain A, also called GT1 motif), which is probably involved in manganese coordination and substrate binding and the C-terminal domain (domain B, also called Gal/GalNAc-T motif), which is probably involved in catalytic reaction and UDP-Gal binding.</text>
</comment>
<comment type="domain">
    <text evidence="5">The ricin B-type lectin domain binds to GalNAc and contributes to the glycopeptide specificity.</text>
</comment>
<comment type="similarity">
    <text evidence="7">Belongs to the glycosyltransferase 2 family. GalNAc-T subfamily.</text>
</comment>
<evidence type="ECO:0000250" key="1"/>
<evidence type="ECO:0000250" key="2">
    <source>
        <dbReference type="UniProtKB" id="O08912"/>
    </source>
</evidence>
<evidence type="ECO:0000250" key="3">
    <source>
        <dbReference type="UniProtKB" id="O45947"/>
    </source>
</evidence>
<evidence type="ECO:0000250" key="4">
    <source>
        <dbReference type="UniProtKB" id="Q10472"/>
    </source>
</evidence>
<evidence type="ECO:0000250" key="5">
    <source>
        <dbReference type="UniProtKB" id="Q10473"/>
    </source>
</evidence>
<evidence type="ECO:0000250" key="6">
    <source>
        <dbReference type="UniProtKB" id="Q86SR1"/>
    </source>
</evidence>
<evidence type="ECO:0000255" key="7"/>
<evidence type="ECO:0000255" key="8">
    <source>
        <dbReference type="PROSITE-ProRule" id="PRU00174"/>
    </source>
</evidence>
<organism>
    <name type="scientific">Caenorhabditis briggsae</name>
    <dbReference type="NCBI Taxonomy" id="6238"/>
    <lineage>
        <taxon>Eukaryota</taxon>
        <taxon>Metazoa</taxon>
        <taxon>Ecdysozoa</taxon>
        <taxon>Nematoda</taxon>
        <taxon>Chromadorea</taxon>
        <taxon>Rhabditida</taxon>
        <taxon>Rhabditina</taxon>
        <taxon>Rhabditomorpha</taxon>
        <taxon>Rhabditoidea</taxon>
        <taxon>Rhabditidae</taxon>
        <taxon>Peloderinae</taxon>
        <taxon>Caenorhabditis</taxon>
    </lineage>
</organism>
<gene>
    <name evidence="3" type="primary">gly-10</name>
    <name type="ORF">CBG22373</name>
</gene>
<dbReference type="EC" id="2.4.1.41"/>
<dbReference type="EMBL" id="HE600912">
    <property type="protein sequence ID" value="CAP38976.2"/>
    <property type="molecule type" value="Genomic_DNA"/>
</dbReference>
<dbReference type="SMR" id="A8Y236"/>
<dbReference type="FunCoup" id="A8Y236">
    <property type="interactions" value="784"/>
</dbReference>
<dbReference type="STRING" id="6238.A8Y236"/>
<dbReference type="GlyCosmos" id="A8Y236">
    <property type="glycosylation" value="2 sites, No reported glycans"/>
</dbReference>
<dbReference type="WormBase" id="CBG22373">
    <property type="protein sequence ID" value="CBP40797"/>
    <property type="gene ID" value="WBGene00040946"/>
    <property type="gene designation" value="Cbr-gly-10"/>
</dbReference>
<dbReference type="eggNOG" id="KOG3736">
    <property type="taxonomic scope" value="Eukaryota"/>
</dbReference>
<dbReference type="HOGENOM" id="CLU_013477_0_1_1"/>
<dbReference type="InParanoid" id="A8Y236"/>
<dbReference type="OMA" id="RCKYVPF"/>
<dbReference type="UniPathway" id="UPA00378"/>
<dbReference type="Proteomes" id="UP000008549">
    <property type="component" value="Unassembled WGS sequence"/>
</dbReference>
<dbReference type="GO" id="GO:0005794">
    <property type="term" value="C:Golgi apparatus"/>
    <property type="evidence" value="ECO:0000318"/>
    <property type="project" value="GO_Central"/>
</dbReference>
<dbReference type="GO" id="GO:0000139">
    <property type="term" value="C:Golgi membrane"/>
    <property type="evidence" value="ECO:0007669"/>
    <property type="project" value="UniProtKB-SubCell"/>
</dbReference>
<dbReference type="GO" id="GO:0030246">
    <property type="term" value="F:carbohydrate binding"/>
    <property type="evidence" value="ECO:0007669"/>
    <property type="project" value="UniProtKB-KW"/>
</dbReference>
<dbReference type="GO" id="GO:0046872">
    <property type="term" value="F:metal ion binding"/>
    <property type="evidence" value="ECO:0007669"/>
    <property type="project" value="UniProtKB-KW"/>
</dbReference>
<dbReference type="GO" id="GO:0004653">
    <property type="term" value="F:polypeptide N-acetylgalactosaminyltransferase activity"/>
    <property type="evidence" value="ECO:0000318"/>
    <property type="project" value="GO_Central"/>
</dbReference>
<dbReference type="GO" id="GO:0006493">
    <property type="term" value="P:protein O-linked glycosylation"/>
    <property type="evidence" value="ECO:0000318"/>
    <property type="project" value="GO_Central"/>
</dbReference>
<dbReference type="CDD" id="cd23439">
    <property type="entry name" value="beta-trefoil_Ricin_GALNT10-like"/>
    <property type="match status" value="1"/>
</dbReference>
<dbReference type="CDD" id="cd02510">
    <property type="entry name" value="pp-GalNAc-T"/>
    <property type="match status" value="1"/>
</dbReference>
<dbReference type="FunFam" id="2.80.10.50:FF:000011">
    <property type="entry name" value="Polypeptide N-acetylgalactosaminyltransferase"/>
    <property type="match status" value="1"/>
</dbReference>
<dbReference type="FunFam" id="3.90.550.10:FF:000029">
    <property type="entry name" value="Polypeptide N-acetylgalactosaminyltransferase"/>
    <property type="match status" value="1"/>
</dbReference>
<dbReference type="Gene3D" id="2.80.10.50">
    <property type="match status" value="1"/>
</dbReference>
<dbReference type="Gene3D" id="3.90.550.10">
    <property type="entry name" value="Spore Coat Polysaccharide Biosynthesis Protein SpsA, Chain A"/>
    <property type="match status" value="1"/>
</dbReference>
<dbReference type="InterPro" id="IPR045885">
    <property type="entry name" value="GalNAc-T"/>
</dbReference>
<dbReference type="InterPro" id="IPR001173">
    <property type="entry name" value="Glyco_trans_2-like"/>
</dbReference>
<dbReference type="InterPro" id="IPR029044">
    <property type="entry name" value="Nucleotide-diphossugar_trans"/>
</dbReference>
<dbReference type="InterPro" id="IPR035992">
    <property type="entry name" value="Ricin_B-like_lectins"/>
</dbReference>
<dbReference type="InterPro" id="IPR000772">
    <property type="entry name" value="Ricin_B_lectin"/>
</dbReference>
<dbReference type="PANTHER" id="PTHR11675">
    <property type="entry name" value="N-ACETYLGALACTOSAMINYLTRANSFERASE"/>
    <property type="match status" value="1"/>
</dbReference>
<dbReference type="PANTHER" id="PTHR11675:SF134">
    <property type="entry name" value="N-ACETYLGALACTOSAMINYLTRANSFERASE 4-RELATED"/>
    <property type="match status" value="1"/>
</dbReference>
<dbReference type="Pfam" id="PF00535">
    <property type="entry name" value="Glycos_transf_2"/>
    <property type="match status" value="1"/>
</dbReference>
<dbReference type="Pfam" id="PF00652">
    <property type="entry name" value="Ricin_B_lectin"/>
    <property type="match status" value="1"/>
</dbReference>
<dbReference type="SMART" id="SM00458">
    <property type="entry name" value="RICIN"/>
    <property type="match status" value="1"/>
</dbReference>
<dbReference type="SUPFAM" id="SSF53448">
    <property type="entry name" value="Nucleotide-diphospho-sugar transferases"/>
    <property type="match status" value="1"/>
</dbReference>
<dbReference type="SUPFAM" id="SSF50370">
    <property type="entry name" value="Ricin B-like lectins"/>
    <property type="match status" value="1"/>
</dbReference>
<dbReference type="PROSITE" id="PS50231">
    <property type="entry name" value="RICIN_B_LECTIN"/>
    <property type="match status" value="1"/>
</dbReference>
<proteinExistence type="inferred from homology"/>
<reference key="1">
    <citation type="journal article" date="2003" name="PLoS Biol.">
        <title>The genome sequence of Caenorhabditis briggsae: a platform for comparative genomics.</title>
        <authorList>
            <person name="Stein L.D."/>
            <person name="Bao Z."/>
            <person name="Blasiar D."/>
            <person name="Blumenthal T."/>
            <person name="Brent M.R."/>
            <person name="Chen N."/>
            <person name="Chinwalla A."/>
            <person name="Clarke L."/>
            <person name="Clee C."/>
            <person name="Coghlan A."/>
            <person name="Coulson A."/>
            <person name="D'Eustachio P."/>
            <person name="Fitch D.H.A."/>
            <person name="Fulton L.A."/>
            <person name="Fulton R.E."/>
            <person name="Griffiths-Jones S."/>
            <person name="Harris T.W."/>
            <person name="Hillier L.W."/>
            <person name="Kamath R."/>
            <person name="Kuwabara P.E."/>
            <person name="Mardis E.R."/>
            <person name="Marra M.A."/>
            <person name="Miner T.L."/>
            <person name="Minx P."/>
            <person name="Mullikin J.C."/>
            <person name="Plumb R.W."/>
            <person name="Rogers J."/>
            <person name="Schein J.E."/>
            <person name="Sohrmann M."/>
            <person name="Spieth J."/>
            <person name="Stajich J.E."/>
            <person name="Wei C."/>
            <person name="Willey D."/>
            <person name="Wilson R.K."/>
            <person name="Durbin R.M."/>
            <person name="Waterston R.H."/>
        </authorList>
    </citation>
    <scope>NUCLEOTIDE SEQUENCE [LARGE SCALE GENOMIC DNA]</scope>
    <source>
        <strain>AF16</strain>
    </source>
</reference>